<name>LGT_STAAN</name>
<feature type="chain" id="PRO_0000172674" description="Phosphatidylglycerol--prolipoprotein diacylglyceryl transferase">
    <location>
        <begin position="1"/>
        <end position="279"/>
    </location>
</feature>
<feature type="transmembrane region" description="Helical" evidence="1">
    <location>
        <begin position="18"/>
        <end position="38"/>
    </location>
</feature>
<feature type="transmembrane region" description="Helical" evidence="1">
    <location>
        <begin position="55"/>
        <end position="75"/>
    </location>
</feature>
<feature type="transmembrane region" description="Helical" evidence="1">
    <location>
        <begin position="89"/>
        <end position="109"/>
    </location>
</feature>
<feature type="transmembrane region" description="Helical" evidence="1">
    <location>
        <begin position="203"/>
        <end position="223"/>
    </location>
</feature>
<feature type="transmembrane region" description="Helical" evidence="1">
    <location>
        <begin position="235"/>
        <end position="255"/>
    </location>
</feature>
<feature type="binding site" evidence="1">
    <location>
        <position position="137"/>
    </location>
    <ligand>
        <name>a 1,2-diacyl-sn-glycero-3-phospho-(1'-sn-glycerol)</name>
        <dbReference type="ChEBI" id="CHEBI:64716"/>
    </ligand>
</feature>
<reference key="1">
    <citation type="journal article" date="2001" name="Lancet">
        <title>Whole genome sequencing of meticillin-resistant Staphylococcus aureus.</title>
        <authorList>
            <person name="Kuroda M."/>
            <person name="Ohta T."/>
            <person name="Uchiyama I."/>
            <person name="Baba T."/>
            <person name="Yuzawa H."/>
            <person name="Kobayashi I."/>
            <person name="Cui L."/>
            <person name="Oguchi A."/>
            <person name="Aoki K."/>
            <person name="Nagai Y."/>
            <person name="Lian J.-Q."/>
            <person name="Ito T."/>
            <person name="Kanamori M."/>
            <person name="Matsumaru H."/>
            <person name="Maruyama A."/>
            <person name="Murakami H."/>
            <person name="Hosoyama A."/>
            <person name="Mizutani-Ui Y."/>
            <person name="Takahashi N.K."/>
            <person name="Sawano T."/>
            <person name="Inoue R."/>
            <person name="Kaito C."/>
            <person name="Sekimizu K."/>
            <person name="Hirakawa H."/>
            <person name="Kuhara S."/>
            <person name="Goto S."/>
            <person name="Yabuzaki J."/>
            <person name="Kanehisa M."/>
            <person name="Yamashita A."/>
            <person name="Oshima K."/>
            <person name="Furuya K."/>
            <person name="Yoshino C."/>
            <person name="Shiba T."/>
            <person name="Hattori M."/>
            <person name="Ogasawara N."/>
            <person name="Hayashi H."/>
            <person name="Hiramatsu K."/>
        </authorList>
    </citation>
    <scope>NUCLEOTIDE SEQUENCE [LARGE SCALE GENOMIC DNA]</scope>
    <source>
        <strain>N315</strain>
    </source>
</reference>
<reference key="2">
    <citation type="submission" date="2007-10" db="UniProtKB">
        <title>Shotgun proteomic analysis of total and membrane protein extracts of S. aureus strain N315.</title>
        <authorList>
            <person name="Vaezzadeh A.R."/>
            <person name="Deshusses J."/>
            <person name="Lescuyer P."/>
            <person name="Hochstrasser D.F."/>
        </authorList>
    </citation>
    <scope>IDENTIFICATION BY MASS SPECTROMETRY [LARGE SCALE ANALYSIS]</scope>
    <source>
        <strain>N315</strain>
    </source>
</reference>
<dbReference type="EC" id="2.5.1.145" evidence="1"/>
<dbReference type="EMBL" id="BA000018">
    <property type="protein sequence ID" value="BAB41949.1"/>
    <property type="molecule type" value="Genomic_DNA"/>
</dbReference>
<dbReference type="PIR" id="B89849">
    <property type="entry name" value="B89849"/>
</dbReference>
<dbReference type="RefSeq" id="WP_000513305.1">
    <property type="nucleotide sequence ID" value="NC_002745.2"/>
</dbReference>
<dbReference type="SMR" id="P60962"/>
<dbReference type="EnsemblBacteria" id="BAB41949">
    <property type="protein sequence ID" value="BAB41949"/>
    <property type="gene ID" value="BAB41949"/>
</dbReference>
<dbReference type="KEGG" id="sau:SA0716"/>
<dbReference type="HOGENOM" id="CLU_013386_0_1_9"/>
<dbReference type="UniPathway" id="UPA00664"/>
<dbReference type="GO" id="GO:0005886">
    <property type="term" value="C:plasma membrane"/>
    <property type="evidence" value="ECO:0007669"/>
    <property type="project" value="UniProtKB-SubCell"/>
</dbReference>
<dbReference type="GO" id="GO:0008961">
    <property type="term" value="F:phosphatidylglycerol-prolipoprotein diacylglyceryl transferase activity"/>
    <property type="evidence" value="ECO:0007669"/>
    <property type="project" value="UniProtKB-UniRule"/>
</dbReference>
<dbReference type="GO" id="GO:0042158">
    <property type="term" value="P:lipoprotein biosynthetic process"/>
    <property type="evidence" value="ECO:0007669"/>
    <property type="project" value="UniProtKB-UniRule"/>
</dbReference>
<dbReference type="HAMAP" id="MF_01147">
    <property type="entry name" value="Lgt"/>
    <property type="match status" value="1"/>
</dbReference>
<dbReference type="InterPro" id="IPR001640">
    <property type="entry name" value="Lgt"/>
</dbReference>
<dbReference type="NCBIfam" id="TIGR00544">
    <property type="entry name" value="lgt"/>
    <property type="match status" value="1"/>
</dbReference>
<dbReference type="PANTHER" id="PTHR30589:SF0">
    <property type="entry name" value="PHOSPHATIDYLGLYCEROL--PROLIPOPROTEIN DIACYLGLYCERYL TRANSFERASE"/>
    <property type="match status" value="1"/>
</dbReference>
<dbReference type="PANTHER" id="PTHR30589">
    <property type="entry name" value="PROLIPOPROTEIN DIACYLGLYCERYL TRANSFERASE"/>
    <property type="match status" value="1"/>
</dbReference>
<dbReference type="Pfam" id="PF01790">
    <property type="entry name" value="LGT"/>
    <property type="match status" value="1"/>
</dbReference>
<dbReference type="PROSITE" id="PS01311">
    <property type="entry name" value="LGT"/>
    <property type="match status" value="1"/>
</dbReference>
<keyword id="KW-1003">Cell membrane</keyword>
<keyword id="KW-0472">Membrane</keyword>
<keyword id="KW-0808">Transferase</keyword>
<keyword id="KW-0812">Transmembrane</keyword>
<keyword id="KW-1133">Transmembrane helix</keyword>
<comment type="function">
    <text evidence="1">Catalyzes the transfer of the diacylglyceryl group from phosphatidylglycerol to the sulfhydryl group of the N-terminal cysteine of a prolipoprotein, the first step in the formation of mature lipoproteins.</text>
</comment>
<comment type="catalytic activity">
    <reaction evidence="1">
        <text>L-cysteinyl-[prolipoprotein] + a 1,2-diacyl-sn-glycero-3-phospho-(1'-sn-glycerol) = an S-1,2-diacyl-sn-glyceryl-L-cysteinyl-[prolipoprotein] + sn-glycerol 1-phosphate + H(+)</text>
        <dbReference type="Rhea" id="RHEA:56712"/>
        <dbReference type="Rhea" id="RHEA-COMP:14679"/>
        <dbReference type="Rhea" id="RHEA-COMP:14680"/>
        <dbReference type="ChEBI" id="CHEBI:15378"/>
        <dbReference type="ChEBI" id="CHEBI:29950"/>
        <dbReference type="ChEBI" id="CHEBI:57685"/>
        <dbReference type="ChEBI" id="CHEBI:64716"/>
        <dbReference type="ChEBI" id="CHEBI:140658"/>
        <dbReference type="EC" id="2.5.1.145"/>
    </reaction>
</comment>
<comment type="pathway">
    <text evidence="1">Protein modification; lipoprotein biosynthesis (diacylglyceryl transfer).</text>
</comment>
<comment type="subcellular location">
    <subcellularLocation>
        <location evidence="1 2">Cell membrane</location>
        <topology evidence="1 2">Multi-pass membrane protein</topology>
    </subcellularLocation>
</comment>
<comment type="similarity">
    <text evidence="1 2">Belongs to the Lgt family.</text>
</comment>
<organism>
    <name type="scientific">Staphylococcus aureus (strain N315)</name>
    <dbReference type="NCBI Taxonomy" id="158879"/>
    <lineage>
        <taxon>Bacteria</taxon>
        <taxon>Bacillati</taxon>
        <taxon>Bacillota</taxon>
        <taxon>Bacilli</taxon>
        <taxon>Bacillales</taxon>
        <taxon>Staphylococcaceae</taxon>
        <taxon>Staphylococcus</taxon>
    </lineage>
</organism>
<protein>
    <recommendedName>
        <fullName evidence="1">Phosphatidylglycerol--prolipoprotein diacylglyceryl transferase</fullName>
        <ecNumber evidence="1">2.5.1.145</ecNumber>
    </recommendedName>
</protein>
<sequence length="279" mass="31582">MGIVFNYIDPVAFNLGPLSVRWYGIIIAVGILLGYFVAQRALVKAGLHKDTLVDIIFYSALFGFIAARIYFVIFQWPYYAENPSEIIKIWHGGIAIHGGLIGGFIAGVIVCKVKNLNPFQIGDIVAPSIILAQGIGRWGNFMNHEAHGGPVSRAFLEQLHLPNFIIENMYINGQYYHPTFLYESIWDVAGFIILVNIRKHLKLGETFFLYLTWYSIGRFFIEGLRTDSLMLTSNIRVAQLVSILLILISISLIVYRRIKYNPPLYSKVGALPWPTKKVK</sequence>
<proteinExistence type="evidence at protein level"/>
<accession>P60962</accession>
<accession>P52282</accession>
<gene>
    <name evidence="1" type="primary">lgt</name>
    <name type="ordered locus">SA0716</name>
</gene>
<evidence type="ECO:0000255" key="1">
    <source>
        <dbReference type="HAMAP-Rule" id="MF_01147"/>
    </source>
</evidence>
<evidence type="ECO:0000305" key="2"/>